<evidence type="ECO:0000250" key="1"/>
<evidence type="ECO:0000250" key="2">
    <source>
        <dbReference type="UniProtKB" id="P00157"/>
    </source>
</evidence>
<evidence type="ECO:0000255" key="3">
    <source>
        <dbReference type="PROSITE-ProRule" id="PRU00967"/>
    </source>
</evidence>
<evidence type="ECO:0000255" key="4">
    <source>
        <dbReference type="PROSITE-ProRule" id="PRU00968"/>
    </source>
</evidence>
<comment type="function">
    <text evidence="2">Component of the ubiquinol-cytochrome c reductase complex (complex III or cytochrome b-c1 complex) that is part of the mitochondrial respiratory chain. The b-c1 complex mediates electron transfer from ubiquinol to cytochrome c. Contributes to the generation of a proton gradient across the mitochondrial membrane that is then used for ATP synthesis.</text>
</comment>
<comment type="cofactor">
    <cofactor evidence="2">
        <name>heme b</name>
        <dbReference type="ChEBI" id="CHEBI:60344"/>
    </cofactor>
    <text evidence="2">Binds 2 heme b groups non-covalently.</text>
</comment>
<comment type="subunit">
    <text evidence="2">The cytochrome bc1 complex contains 11 subunits: 3 respiratory subunits (MT-CYB, CYC1 and UQCRFS1), 2 core proteins (UQCRC1 and UQCRC2) and 6 low-molecular weight proteins (UQCRH/QCR6, UQCRB/QCR7, UQCRQ/QCR8, UQCR10/QCR9, UQCR11/QCR10 and a cleavage product of UQCRFS1). This cytochrome bc1 complex then forms a dimer.</text>
</comment>
<comment type="subcellular location">
    <subcellularLocation>
        <location evidence="2">Mitochondrion inner membrane</location>
        <topology evidence="2">Multi-pass membrane protein</topology>
    </subcellularLocation>
</comment>
<comment type="miscellaneous">
    <text evidence="1">Heme 1 (or BL or b562) is low-potential and absorbs at about 562 nm, and heme 2 (or BH or b566) is high-potential and absorbs at about 566 nm.</text>
</comment>
<comment type="similarity">
    <text evidence="3 4">Belongs to the cytochrome b family.</text>
</comment>
<comment type="caution">
    <text evidence="2">The full-length protein contains only eight transmembrane helices, not nine as predicted by bioinformatics tools.</text>
</comment>
<geneLocation type="mitochondrion"/>
<organism>
    <name type="scientific">Akodon reigi</name>
    <name type="common">Reig's grass mouse</name>
    <dbReference type="NCBI Taxonomy" id="230112"/>
    <lineage>
        <taxon>Eukaryota</taxon>
        <taxon>Metazoa</taxon>
        <taxon>Chordata</taxon>
        <taxon>Craniata</taxon>
        <taxon>Vertebrata</taxon>
        <taxon>Euteleostomi</taxon>
        <taxon>Mammalia</taxon>
        <taxon>Eutheria</taxon>
        <taxon>Euarchontoglires</taxon>
        <taxon>Glires</taxon>
        <taxon>Rodentia</taxon>
        <taxon>Myomorpha</taxon>
        <taxon>Muroidea</taxon>
        <taxon>Cricetidae</taxon>
        <taxon>Sigmodontinae</taxon>
        <taxon>Akodon</taxon>
    </lineage>
</organism>
<keyword id="KW-0249">Electron transport</keyword>
<keyword id="KW-0349">Heme</keyword>
<keyword id="KW-0408">Iron</keyword>
<keyword id="KW-0472">Membrane</keyword>
<keyword id="KW-0479">Metal-binding</keyword>
<keyword id="KW-0496">Mitochondrion</keyword>
<keyword id="KW-0999">Mitochondrion inner membrane</keyword>
<keyword id="KW-0679">Respiratory chain</keyword>
<keyword id="KW-0812">Transmembrane</keyword>
<keyword id="KW-1133">Transmembrane helix</keyword>
<keyword id="KW-0813">Transport</keyword>
<keyword id="KW-0830">Ubiquinone</keyword>
<gene>
    <name type="primary">MT-CYB</name>
    <name type="synonym">COB</name>
    <name type="synonym">CYTB</name>
    <name type="synonym">MTCYB</name>
</gene>
<reference key="1">
    <citation type="journal article" date="2003" name="Mamm. Biol.">
        <title>Phylogenetic analysis of sigmodontine rodents (Muroidea), with special reference to the akodont genus Deltamys.</title>
        <authorList>
            <person name="D'Elia G."/>
            <person name="Gonzalez E.M."/>
            <person name="Pardinas U.F.J."/>
        </authorList>
    </citation>
    <scope>NUCLEOTIDE SEQUENCE [GENOMIC DNA]</scope>
</reference>
<name>CYB_AKORE</name>
<proteinExistence type="inferred from homology"/>
<sequence>MKILRKNHPLLKIINHSFIDLPTPSNISSWWNFGSLLGMCLVIQILTGLFLAMHYTSDTTTAFSSVAHICRDVNYGWLIRYLHANGASMFFICLFIHVGRGIYYGSYVLSETWNIGIILFLTTMATAFVGYVLPWGQMSFWGATVITNLLSAIPYIGSTLVEWIWGGFSVDKATLTRFFAFHFILPFIIAAFALVHLLFLHETGSNNPSGLNSDSDKIPFHPYYTTKDLLGIFLLLLVLMILALFFPDILGDPDNFTPANPLNTPAHIKPEWYFLFAYAILRSIPNKLGGVLALVLSILILAAFPLLNISKQHGLIFRPVTQIIYWIFIANLLVLTWIGGQPVEYPFTTIGQIASITYFTIIIILIPVSNTIENNIIKL</sequence>
<feature type="chain" id="PRO_0000254979" description="Cytochrome b">
    <location>
        <begin position="1"/>
        <end position="379"/>
    </location>
</feature>
<feature type="transmembrane region" description="Helical" evidence="2">
    <location>
        <begin position="33"/>
        <end position="53"/>
    </location>
</feature>
<feature type="transmembrane region" description="Helical" evidence="2">
    <location>
        <begin position="77"/>
        <end position="98"/>
    </location>
</feature>
<feature type="transmembrane region" description="Helical" evidence="2">
    <location>
        <begin position="113"/>
        <end position="133"/>
    </location>
</feature>
<feature type="transmembrane region" description="Helical" evidence="2">
    <location>
        <begin position="178"/>
        <end position="198"/>
    </location>
</feature>
<feature type="transmembrane region" description="Helical" evidence="2">
    <location>
        <begin position="226"/>
        <end position="246"/>
    </location>
</feature>
<feature type="transmembrane region" description="Helical" evidence="2">
    <location>
        <begin position="288"/>
        <end position="308"/>
    </location>
</feature>
<feature type="transmembrane region" description="Helical" evidence="2">
    <location>
        <begin position="320"/>
        <end position="340"/>
    </location>
</feature>
<feature type="transmembrane region" description="Helical" evidence="2">
    <location>
        <begin position="347"/>
        <end position="367"/>
    </location>
</feature>
<feature type="binding site" description="axial binding residue" evidence="2">
    <location>
        <position position="83"/>
    </location>
    <ligand>
        <name>heme b</name>
        <dbReference type="ChEBI" id="CHEBI:60344"/>
        <label>b562</label>
    </ligand>
    <ligandPart>
        <name>Fe</name>
        <dbReference type="ChEBI" id="CHEBI:18248"/>
    </ligandPart>
</feature>
<feature type="binding site" description="axial binding residue" evidence="2">
    <location>
        <position position="97"/>
    </location>
    <ligand>
        <name>heme b</name>
        <dbReference type="ChEBI" id="CHEBI:60344"/>
        <label>b566</label>
    </ligand>
    <ligandPart>
        <name>Fe</name>
        <dbReference type="ChEBI" id="CHEBI:18248"/>
    </ligandPart>
</feature>
<feature type="binding site" description="axial binding residue" evidence="2">
    <location>
        <position position="182"/>
    </location>
    <ligand>
        <name>heme b</name>
        <dbReference type="ChEBI" id="CHEBI:60344"/>
        <label>b562</label>
    </ligand>
    <ligandPart>
        <name>Fe</name>
        <dbReference type="ChEBI" id="CHEBI:18248"/>
    </ligandPart>
</feature>
<feature type="binding site" description="axial binding residue" evidence="2">
    <location>
        <position position="196"/>
    </location>
    <ligand>
        <name>heme b</name>
        <dbReference type="ChEBI" id="CHEBI:60344"/>
        <label>b566</label>
    </ligand>
    <ligandPart>
        <name>Fe</name>
        <dbReference type="ChEBI" id="CHEBI:18248"/>
    </ligandPart>
</feature>
<feature type="binding site" evidence="2">
    <location>
        <position position="201"/>
    </location>
    <ligand>
        <name>a ubiquinone</name>
        <dbReference type="ChEBI" id="CHEBI:16389"/>
    </ligand>
</feature>
<protein>
    <recommendedName>
        <fullName>Cytochrome b</fullName>
    </recommendedName>
    <alternativeName>
        <fullName>Complex III subunit 3</fullName>
    </alternativeName>
    <alternativeName>
        <fullName>Complex III subunit III</fullName>
    </alternativeName>
    <alternativeName>
        <fullName>Cytochrome b-c1 complex subunit 3</fullName>
    </alternativeName>
    <alternativeName>
        <fullName>Ubiquinol-cytochrome-c reductase complex cytochrome b subunit</fullName>
    </alternativeName>
</protein>
<accession>Q6XZN9</accession>
<dbReference type="EMBL" id="AY195865">
    <property type="protein sequence ID" value="AAP34294.1"/>
    <property type="molecule type" value="Genomic_DNA"/>
</dbReference>
<dbReference type="SMR" id="Q6XZN9"/>
<dbReference type="GO" id="GO:0005743">
    <property type="term" value="C:mitochondrial inner membrane"/>
    <property type="evidence" value="ECO:0007669"/>
    <property type="project" value="UniProtKB-SubCell"/>
</dbReference>
<dbReference type="GO" id="GO:0045275">
    <property type="term" value="C:respiratory chain complex III"/>
    <property type="evidence" value="ECO:0007669"/>
    <property type="project" value="InterPro"/>
</dbReference>
<dbReference type="GO" id="GO:0046872">
    <property type="term" value="F:metal ion binding"/>
    <property type="evidence" value="ECO:0007669"/>
    <property type="project" value="UniProtKB-KW"/>
</dbReference>
<dbReference type="GO" id="GO:0008121">
    <property type="term" value="F:ubiquinol-cytochrome-c reductase activity"/>
    <property type="evidence" value="ECO:0007669"/>
    <property type="project" value="InterPro"/>
</dbReference>
<dbReference type="GO" id="GO:0006122">
    <property type="term" value="P:mitochondrial electron transport, ubiquinol to cytochrome c"/>
    <property type="evidence" value="ECO:0007669"/>
    <property type="project" value="TreeGrafter"/>
</dbReference>
<dbReference type="CDD" id="cd00290">
    <property type="entry name" value="cytochrome_b_C"/>
    <property type="match status" value="1"/>
</dbReference>
<dbReference type="CDD" id="cd00284">
    <property type="entry name" value="Cytochrome_b_N"/>
    <property type="match status" value="1"/>
</dbReference>
<dbReference type="FunFam" id="1.20.810.10:FF:000002">
    <property type="entry name" value="Cytochrome b"/>
    <property type="match status" value="1"/>
</dbReference>
<dbReference type="Gene3D" id="1.20.810.10">
    <property type="entry name" value="Cytochrome Bc1 Complex, Chain C"/>
    <property type="match status" value="1"/>
</dbReference>
<dbReference type="InterPro" id="IPR005798">
    <property type="entry name" value="Cyt_b/b6_C"/>
</dbReference>
<dbReference type="InterPro" id="IPR036150">
    <property type="entry name" value="Cyt_b/b6_C_sf"/>
</dbReference>
<dbReference type="InterPro" id="IPR005797">
    <property type="entry name" value="Cyt_b/b6_N"/>
</dbReference>
<dbReference type="InterPro" id="IPR027387">
    <property type="entry name" value="Cytb/b6-like_sf"/>
</dbReference>
<dbReference type="InterPro" id="IPR030689">
    <property type="entry name" value="Cytochrome_b"/>
</dbReference>
<dbReference type="InterPro" id="IPR048260">
    <property type="entry name" value="Cytochrome_b_C_euk/bac"/>
</dbReference>
<dbReference type="InterPro" id="IPR048259">
    <property type="entry name" value="Cytochrome_b_N_euk/bac"/>
</dbReference>
<dbReference type="InterPro" id="IPR016174">
    <property type="entry name" value="Di-haem_cyt_TM"/>
</dbReference>
<dbReference type="PANTHER" id="PTHR19271">
    <property type="entry name" value="CYTOCHROME B"/>
    <property type="match status" value="1"/>
</dbReference>
<dbReference type="PANTHER" id="PTHR19271:SF16">
    <property type="entry name" value="CYTOCHROME B"/>
    <property type="match status" value="1"/>
</dbReference>
<dbReference type="Pfam" id="PF00032">
    <property type="entry name" value="Cytochrom_B_C"/>
    <property type="match status" value="1"/>
</dbReference>
<dbReference type="Pfam" id="PF00033">
    <property type="entry name" value="Cytochrome_B"/>
    <property type="match status" value="1"/>
</dbReference>
<dbReference type="PIRSF" id="PIRSF038885">
    <property type="entry name" value="COB"/>
    <property type="match status" value="1"/>
</dbReference>
<dbReference type="SUPFAM" id="SSF81648">
    <property type="entry name" value="a domain/subunit of cytochrome bc1 complex (Ubiquinol-cytochrome c reductase)"/>
    <property type="match status" value="1"/>
</dbReference>
<dbReference type="SUPFAM" id="SSF81342">
    <property type="entry name" value="Transmembrane di-heme cytochromes"/>
    <property type="match status" value="1"/>
</dbReference>
<dbReference type="PROSITE" id="PS51003">
    <property type="entry name" value="CYTB_CTER"/>
    <property type="match status" value="1"/>
</dbReference>
<dbReference type="PROSITE" id="PS51002">
    <property type="entry name" value="CYTB_NTER"/>
    <property type="match status" value="1"/>
</dbReference>